<reference key="1">
    <citation type="journal article" date="1999" name="J. Bacteriol.">
        <title>The propanediol utilization (pdu) operon of Salmonella enterica serovar typhimurium LT2 includes genes necessary for formation of polyhedral organelles involved in coenzyme B(12)-dependent 1, 2-propanediol degradation.</title>
        <authorList>
            <person name="Bobik T.A."/>
            <person name="Havemann G.D."/>
            <person name="Busch R.J."/>
            <person name="Williams D.S."/>
            <person name="Aldrich H.C."/>
        </authorList>
    </citation>
    <scope>NUCLEOTIDE SEQUENCE [GENOMIC DNA]</scope>
    <scope>PATHWAY</scope>
    <scope>INDUCTION</scope>
    <source>
        <strain>LT2</strain>
    </source>
</reference>
<reference key="2">
    <citation type="journal article" date="2001" name="Nature">
        <title>Complete genome sequence of Salmonella enterica serovar Typhimurium LT2.</title>
        <authorList>
            <person name="McClelland M."/>
            <person name="Sanderson K.E."/>
            <person name="Spieth J."/>
            <person name="Clifton S.W."/>
            <person name="Latreille P."/>
            <person name="Courtney L."/>
            <person name="Porwollik S."/>
            <person name="Ali J."/>
            <person name="Dante M."/>
            <person name="Du F."/>
            <person name="Hou S."/>
            <person name="Layman D."/>
            <person name="Leonard S."/>
            <person name="Nguyen C."/>
            <person name="Scott K."/>
            <person name="Holmes A."/>
            <person name="Grewal N."/>
            <person name="Mulvaney E."/>
            <person name="Ryan E."/>
            <person name="Sun H."/>
            <person name="Florea L."/>
            <person name="Miller W."/>
            <person name="Stoneking T."/>
            <person name="Nhan M."/>
            <person name="Waterston R."/>
            <person name="Wilson R.K."/>
        </authorList>
    </citation>
    <scope>NUCLEOTIDE SEQUENCE [LARGE SCALE GENOMIC DNA]</scope>
    <source>
        <strain>LT2 / SGSC1412 / ATCC 700720</strain>
    </source>
</reference>
<reference key="3">
    <citation type="journal article" date="2003" name="J. Bacteriol.">
        <title>Protein content of polyhedral organelles involved in coenzyme B12-dependent degradation of 1,2-propanediol in Salmonella enterica serovar Typhimurium LT2.</title>
        <authorList>
            <person name="Havemann G.D."/>
            <person name="Bobik T.A."/>
        </authorList>
    </citation>
    <scope>IDENTIFICATION BY MASS SPECTROMETRY</scope>
    <scope>SUBCELLULAR LOCATION</scope>
    <source>
        <strain>LT2</strain>
    </source>
</reference>
<reference key="4">
    <citation type="journal article" date="2001" name="J. Bacteriol.">
        <title>Functional genomic, biochemical, and genetic characterization of the Salmonella pduO gene, an ATP:cob(I)alamin adenosyltransferase gene.</title>
        <authorList>
            <person name="Johnson C.L."/>
            <person name="Pechonick E."/>
            <person name="Park S.D."/>
            <person name="Havemann G.D."/>
            <person name="Leal N.A."/>
            <person name="Bobik T.A."/>
        </authorList>
    </citation>
    <scope>FUNCTION</scope>
    <scope>CATALYTIC ACTIVITY</scope>
    <scope>DISRUPTION PHENOTYPE</scope>
    <scope>SEQUENCE REVISION</scope>
    <source>
        <strain>LT2</strain>
    </source>
</reference>
<reference key="5">
    <citation type="journal article" date="2004" name="J. Bacteriol.">
        <title>Purification and initial characterization of the Salmonella enterica PduO ATP:Cob(I)alamin adenosyltransferase.</title>
        <authorList>
            <person name="Johnson C.L."/>
            <person name="Buszko M.L."/>
            <person name="Bobik T.A."/>
        </authorList>
    </citation>
    <scope>FUNCTION</scope>
    <scope>CATALYTIC ACTIVITY</scope>
    <scope>COFACTOR</scope>
    <scope>ACTIVITY REGULATION</scope>
    <scope>BIOPHYSICOCHEMICAL PROPERTIES</scope>
    <scope>DOMAIN</scope>
</reference>
<reference key="6">
    <citation type="journal article" date="2005" name="Microbiology">
        <title>Biochemical evidence that the pduS gene encodes a bifunctional cobalamin reductase.</title>
        <authorList>
            <person name="Sampson E.M."/>
            <person name="Johnson C.L.V."/>
            <person name="Bobik T.A."/>
        </authorList>
    </citation>
    <scope>FUNCTION</scope>
    <scope>SUBUNIT</scope>
    <scope>INTERACTION WITH PDUS</scope>
    <source>
        <strain>LT2</strain>
    </source>
</reference>
<reference key="7">
    <citation type="journal article" date="2010" name="J. Bacteriol.">
        <title>Characterization of the PduS cobalamin reductase of Salmonella enterica and its role in the Pdu microcompartment.</title>
        <authorList>
            <person name="Cheng S."/>
            <person name="Bobik T.A."/>
        </authorList>
    </citation>
    <scope>FUNCTION</scope>
    <scope>CATALYTIC ACTIVITY</scope>
    <scope>FMN COFACTOR</scope>
    <scope>BIOPHYSICOCHEMICAL PROPERTIES</scope>
    <scope>SUBUNIT</scope>
    <scope>INTERACTION WITH PDUS</scope>
    <scope>DISRUPTION PHENOTYPE</scope>
    <source>
        <strain>LT2</strain>
    </source>
</reference>
<reference key="8">
    <citation type="journal article" date="2017" name="PLoS Comput. Biol.">
        <title>A systems-level model reveals that 1,2-Propanediol utilization microcompartments enhance pathway flux through intermediate sequestration.</title>
        <authorList>
            <person name="Jakobson C.M."/>
            <person name="Tullman-Ercek D."/>
            <person name="Slininger M.F."/>
            <person name="Mangan N.M."/>
        </authorList>
    </citation>
    <scope>SYSTEM-MODELING</scope>
    <scope>FUNCTION</scope>
    <source>
        <strain>LT2</strain>
    </source>
</reference>
<reference evidence="18 19" key="9">
    <citation type="journal article" date="2016" name="Front. Microbiol.">
        <title>The Crystal Structure of the C-Terminal Domain of the Salmonella enterica PduO Protein: An Old Fold with a New Heme-Binding Mode.</title>
        <authorList>
            <person name="Ortiz de Orue Lucana D."/>
            <person name="Hickey N."/>
            <person name="Hensel M."/>
            <person name="Klare J.P."/>
            <person name="Geremia S."/>
            <person name="Tiufiakova T."/>
            <person name="Torda A.E."/>
        </authorList>
    </citation>
    <scope>X-RAY CRYSTALLOGRAPHY (1.97 ANGSTROMS) OF 194-336 IN COMPLEX WITH HEME AND MAGNESIUM</scope>
    <scope>FUNCTION</scope>
    <scope>HEME B COFACTOR</scope>
    <scope>SUBUNIT</scope>
    <scope>DOMAIN</scope>
    <scope>DISRUPTION PHENOTYPE</scope>
    <scope>MUTAGENESIS OF HIS-207</scope>
    <source>
        <strain evidence="10">ATCC 14028 / SGSC 2980 / CDC 6516-60 / NCTC 12023</strain>
    </source>
</reference>
<proteinExistence type="evidence at protein level"/>
<protein>
    <recommendedName>
        <fullName evidence="9">Corrinoid adenosyltransferase PduO</fullName>
        <ecNumber evidence="2 4">2.5.1.-</ecNumber>
    </recommendedName>
    <alternativeName>
        <fullName>ATP:co(I)rrinoid adenosyltransferase PduO</fullName>
        <shortName evidence="10">ACA</shortName>
    </alternativeName>
    <alternativeName>
        <fullName>Propanediol utilization protein PduO</fullName>
    </alternativeName>
</protein>
<organism>
    <name type="scientific">Salmonella typhimurium (strain LT2 / SGSC1412 / ATCC 700720)</name>
    <dbReference type="NCBI Taxonomy" id="99287"/>
    <lineage>
        <taxon>Bacteria</taxon>
        <taxon>Pseudomonadati</taxon>
        <taxon>Pseudomonadota</taxon>
        <taxon>Gammaproteobacteria</taxon>
        <taxon>Enterobacterales</taxon>
        <taxon>Enterobacteriaceae</taxon>
        <taxon>Salmonella</taxon>
    </lineage>
</organism>
<feature type="chain" id="PRO_0000454282" description="Corrinoid adenosyltransferase PduO">
    <location>
        <begin position="1"/>
        <end position="336"/>
    </location>
</feature>
<feature type="region of interest" description="PduON" evidence="15 16">
    <location>
        <begin position="1"/>
        <end position="185"/>
    </location>
</feature>
<feature type="region of interest" description="PduOC" evidence="16">
    <location>
        <begin position="194"/>
        <end position="336"/>
    </location>
</feature>
<feature type="binding site" description="axial binding residue" evidence="19">
    <location>
        <position position="207"/>
    </location>
    <ligand>
        <name>heme</name>
        <dbReference type="ChEBI" id="CHEBI:30413"/>
    </ligand>
    <ligandPart>
        <name>Fe</name>
        <dbReference type="ChEBI" id="CHEBI:18248"/>
    </ligandPart>
</feature>
<feature type="binding site" evidence="19">
    <location>
        <position position="215"/>
    </location>
    <ligand>
        <name>Mg(2+)</name>
        <dbReference type="ChEBI" id="CHEBI:18420"/>
    </ligand>
</feature>
<feature type="binding site" evidence="19">
    <location>
        <position position="218"/>
    </location>
    <ligand>
        <name>Mg(2+)</name>
        <dbReference type="ChEBI" id="CHEBI:18420"/>
    </ligand>
</feature>
<feature type="mutagenesis site" description="PduOC is no longer red, the mutation in the whole protein does not complement as well as wild-type." evidence="7">
    <original>H</original>
    <variation>A</variation>
    <location>
        <position position="207"/>
    </location>
</feature>
<feature type="sequence conflict" description="In Ref. 1; AAD39014." evidence="11" ref="1">
    <original>EAAIDRAMARVEPLHSFILPG</original>
    <variation>GSRYRSGDGPRRTAAQLYFTR</variation>
    <location>
        <begin position="94"/>
        <end position="114"/>
    </location>
</feature>
<feature type="sequence conflict" description="In Ref. 1; AAD39014." evidence="11" ref="1">
    <original>G</original>
    <variation>GG</variation>
    <location>
        <position position="294"/>
    </location>
</feature>
<feature type="helix" evidence="20">
    <location>
        <begin position="203"/>
        <end position="219"/>
    </location>
</feature>
<feature type="strand" evidence="20">
    <location>
        <begin position="225"/>
        <end position="230"/>
    </location>
</feature>
<feature type="strand" evidence="20">
    <location>
        <begin position="235"/>
        <end position="240"/>
    </location>
</feature>
<feature type="helix" evidence="20">
    <location>
        <begin position="248"/>
        <end position="261"/>
    </location>
</feature>
<feature type="helix" evidence="20">
    <location>
        <begin position="266"/>
        <end position="269"/>
    </location>
</feature>
<feature type="turn" evidence="20">
    <location>
        <begin position="270"/>
        <end position="273"/>
    </location>
</feature>
<feature type="turn" evidence="20">
    <location>
        <begin position="278"/>
        <end position="281"/>
    </location>
</feature>
<feature type="helix" evidence="20">
    <location>
        <begin position="282"/>
        <end position="285"/>
    </location>
</feature>
<feature type="turn" evidence="20">
    <location>
        <begin position="286"/>
        <end position="288"/>
    </location>
</feature>
<feature type="strand" evidence="20">
    <location>
        <begin position="293"/>
        <end position="301"/>
    </location>
</feature>
<feature type="strand" evidence="20">
    <location>
        <begin position="304"/>
        <end position="314"/>
    </location>
</feature>
<feature type="helix" evidence="20">
    <location>
        <begin position="316"/>
        <end position="328"/>
    </location>
</feature>
<sequence>MAIYTRTGDAGTTSLFTGQRVSKTHPRVEAYGTLDELNAALSLCACAAADENHRTLLEAIQQQLFWFSAELASDSEQPSPKQRYISSEEISALEAAIDRAMARVEPLHSFILPGRCEAASRLHFARTLARRAERRLVELATEVNVRQVLMRYINRLSDCLYALARAEDSDAHQANIIREVSKRYLAACQPPHSKETTPVALSFHDLHQLTRAAVERAQQLQVPVVVSIVDAHGTETVTWRMPDALLVSSELAPKKAWTAVAMKTATHELSDVVQPGAALYGLESHLQGKVVTFGGGYALWRDGILIGGLGISGGSVEQDMDIAQTAIAAINVGTHQ</sequence>
<dbReference type="EC" id="2.5.1.-" evidence="2 4"/>
<dbReference type="EMBL" id="AF026270">
    <property type="protein sequence ID" value="AAD39014.1"/>
    <property type="molecule type" value="Genomic_DNA"/>
</dbReference>
<dbReference type="EMBL" id="AE006468">
    <property type="protein sequence ID" value="AAL20954.1"/>
    <property type="molecule type" value="Genomic_DNA"/>
</dbReference>
<dbReference type="RefSeq" id="NP_460995.1">
    <property type="nucleotide sequence ID" value="NC_003197.2"/>
</dbReference>
<dbReference type="RefSeq" id="WP_001029484.1">
    <property type="nucleotide sequence ID" value="NC_003197.2"/>
</dbReference>
<dbReference type="PDB" id="5CX7">
    <property type="method" value="X-ray"/>
    <property type="resolution" value="1.97 A"/>
    <property type="chains" value="A/B/C/D/E/F/G/H/I/J/K/L/M/N/O/P=194-336"/>
</dbReference>
<dbReference type="PDBsum" id="5CX7"/>
<dbReference type="SMR" id="Q8ZNR5"/>
<dbReference type="IntAct" id="Q8ZNR5">
    <property type="interactions" value="1"/>
</dbReference>
<dbReference type="STRING" id="99287.STM2050"/>
<dbReference type="PaxDb" id="99287-STM2050"/>
<dbReference type="GeneID" id="1253571"/>
<dbReference type="KEGG" id="stm:STM2050"/>
<dbReference type="PATRIC" id="fig|99287.12.peg.2172"/>
<dbReference type="HOGENOM" id="CLU_068893_0_0_6"/>
<dbReference type="OMA" id="QIFWFSA"/>
<dbReference type="PhylomeDB" id="Q8ZNR5"/>
<dbReference type="BioCyc" id="MetaCyc:STM2050-MONOMER"/>
<dbReference type="BioCyc" id="SENT99287:STM2050-MONOMER"/>
<dbReference type="UniPathway" id="UPA00148"/>
<dbReference type="UniPathway" id="UPA00621"/>
<dbReference type="Proteomes" id="UP000001014">
    <property type="component" value="Chromosome"/>
</dbReference>
<dbReference type="GO" id="GO:0031472">
    <property type="term" value="C:propanediol degradation polyhedral organelle"/>
    <property type="evidence" value="ECO:0000314"/>
    <property type="project" value="UniProtKB"/>
</dbReference>
<dbReference type="GO" id="GO:0005524">
    <property type="term" value="F:ATP binding"/>
    <property type="evidence" value="ECO:0007669"/>
    <property type="project" value="UniProtKB-KW"/>
</dbReference>
<dbReference type="GO" id="GO:0008817">
    <property type="term" value="F:corrinoid adenosyltransferase activity"/>
    <property type="evidence" value="ECO:0000318"/>
    <property type="project" value="GO_Central"/>
</dbReference>
<dbReference type="GO" id="GO:0046872">
    <property type="term" value="F:metal ion binding"/>
    <property type="evidence" value="ECO:0007669"/>
    <property type="project" value="UniProtKB-KW"/>
</dbReference>
<dbReference type="GO" id="GO:0009236">
    <property type="term" value="P:cobalamin biosynthetic process"/>
    <property type="evidence" value="ECO:0007669"/>
    <property type="project" value="UniProtKB-UniPathway"/>
</dbReference>
<dbReference type="GO" id="GO:0051144">
    <property type="term" value="P:propanediol catabolic process"/>
    <property type="evidence" value="ECO:0007669"/>
    <property type="project" value="UniProtKB-UniPathway"/>
</dbReference>
<dbReference type="FunFam" id="1.20.1200.10:FF:000002">
    <property type="entry name" value="Cob(I)yrinic acid a,c-diamide adenosyltransferase"/>
    <property type="match status" value="1"/>
</dbReference>
<dbReference type="FunFam" id="3.30.450.150:FF:000001">
    <property type="entry name" value="Cob(I)yrinic acid a,c-diamide adenosyltransferase"/>
    <property type="match status" value="1"/>
</dbReference>
<dbReference type="Gene3D" id="1.20.1200.10">
    <property type="entry name" value="Cobalamin adenosyltransferase-like"/>
    <property type="match status" value="1"/>
</dbReference>
<dbReference type="Gene3D" id="3.30.450.150">
    <property type="entry name" value="Haem-degrading domain"/>
    <property type="match status" value="1"/>
</dbReference>
<dbReference type="InterPro" id="IPR016030">
    <property type="entry name" value="CblAdoTrfase-like"/>
</dbReference>
<dbReference type="InterPro" id="IPR036451">
    <property type="entry name" value="CblAdoTrfase-like_sf"/>
</dbReference>
<dbReference type="InterPro" id="IPR009221">
    <property type="entry name" value="PduO"/>
</dbReference>
<dbReference type="InterPro" id="IPR029499">
    <property type="entry name" value="PduO-typ"/>
</dbReference>
<dbReference type="InterPro" id="IPR005624">
    <property type="entry name" value="PduO/GlcC-like"/>
</dbReference>
<dbReference type="InterPro" id="IPR038084">
    <property type="entry name" value="PduO/GlcC-like_sf"/>
</dbReference>
<dbReference type="NCBIfam" id="TIGR00636">
    <property type="entry name" value="PduO_Nterm"/>
    <property type="match status" value="1"/>
</dbReference>
<dbReference type="PANTHER" id="PTHR12213">
    <property type="entry name" value="CORRINOID ADENOSYLTRANSFERASE"/>
    <property type="match status" value="1"/>
</dbReference>
<dbReference type="PANTHER" id="PTHR12213:SF0">
    <property type="entry name" value="CORRINOID ADENOSYLTRANSFERASE MMAB"/>
    <property type="match status" value="1"/>
</dbReference>
<dbReference type="Pfam" id="PF01923">
    <property type="entry name" value="Cob_adeno_trans"/>
    <property type="match status" value="1"/>
</dbReference>
<dbReference type="Pfam" id="PF03928">
    <property type="entry name" value="HbpS-like"/>
    <property type="match status" value="1"/>
</dbReference>
<dbReference type="PIRSF" id="PIRSF036411">
    <property type="entry name" value="ATR_PduO"/>
    <property type="match status" value="1"/>
</dbReference>
<dbReference type="SUPFAM" id="SSF89028">
    <property type="entry name" value="Cobalamin adenosyltransferase-like"/>
    <property type="match status" value="1"/>
</dbReference>
<dbReference type="SUPFAM" id="SSF143744">
    <property type="entry name" value="GlcG-like"/>
    <property type="match status" value="1"/>
</dbReference>
<keyword id="KW-0002">3D-structure</keyword>
<keyword id="KW-0067">ATP-binding</keyword>
<keyword id="KW-1283">Bacterial microcompartment</keyword>
<keyword id="KW-0169">Cobalamin biosynthesis</keyword>
<keyword id="KW-0349">Heme</keyword>
<keyword id="KW-0408">Iron</keyword>
<keyword id="KW-0460">Magnesium</keyword>
<keyword id="KW-0479">Metal-binding</keyword>
<keyword id="KW-0547">Nucleotide-binding</keyword>
<keyword id="KW-1185">Reference proteome</keyword>
<keyword id="KW-0808">Transferase</keyword>
<comment type="function">
    <text evidence="2 4 5 6 7 11">Converts cob(I)alamin to adenosylcobalamin (adenosylcob(III)alamin), the cofactor for propanediol dehydratase. Found in the bacterial microcompartment (BMC) dedicated to 1,2-propanediol (1,2-PD) degradation (PubMed:11160088, PubMed:15547259, PubMed:15817784, PubMed:20656910, PubMed:27446048). For adenosylcobalamin synthesis dATP can replace ATP, but no other nucleotides will substitute (PubMed:15547259). PduS and PduO allow regeneration of the adenosylcobalamin cofactor within the BMC (Probable).</text>
</comment>
<comment type="function">
    <text evidence="17">The 1,2-PD-specific bacterial microcompartment (BMC) concentrates low levels of 1,2-PD catabolic enzymes, concentrates volatile reaction intermediates thus enhancing pathway flux and keeps the level of toxic, mutagenic propionaldehyde low.</text>
</comment>
<comment type="catalytic activity">
    <reaction evidence="4 7 13">
        <text>cob(I)alamin-[corrinoid adenosyltransferase] + ATP = apo-[corrinoid adenosyltransferase] + adenosylcob(III)alamin + triphosphate</text>
        <dbReference type="Rhea" id="RHEA:56796"/>
        <dbReference type="Rhea" id="RHEA-COMP:14743"/>
        <dbReference type="Rhea" id="RHEA-COMP:14744"/>
        <dbReference type="ChEBI" id="CHEBI:18036"/>
        <dbReference type="ChEBI" id="CHEBI:18408"/>
        <dbReference type="ChEBI" id="CHEBI:30616"/>
        <dbReference type="ChEBI" id="CHEBI:60488"/>
        <dbReference type="ChEBI" id="CHEBI:83228"/>
    </reaction>
</comment>
<comment type="cofactor">
    <cofactor evidence="7 19">
        <name>heme b</name>
        <dbReference type="ChEBI" id="CHEBI:60344"/>
    </cofactor>
    <text evidence="7">Stoichiometry of heme binding is 2 PduOC:1 heme; the binding pocket is formed by a PduOC dimer. Full-length PduO also binds heme.</text>
</comment>
<comment type="cofactor">
    <cofactor evidence="4 7">
        <name>Mg(2+)</name>
        <dbReference type="ChEBI" id="CHEBI:18420"/>
    </cofactor>
    <text evidence="4">Mn(2+) and Co(2+) are almost as active as Mg(2+) for adenosylcobalamin synthesis.</text>
</comment>
<comment type="activity regulation">
    <text evidence="4">Inhibited by ADP but not significantly by other nucleotides, inhibited by diphosphate and less well by triphosphate.</text>
</comment>
<comment type="biophysicochemical properties">
    <kinetics>
        <KM evidence="4">19.8 uM for ATP</KM>
        <KM evidence="4">4.5 uM for cob(I)alamin</KM>
        <Vmax evidence="4">243.0 nmol/min/mg enzyme</Vmax>
    </kinetics>
</comment>
<comment type="pathway">
    <text evidence="1">Polyol metabolism; 1,2-propanediol degradation.</text>
</comment>
<comment type="pathway">
    <text evidence="12">Cofactor biosynthesis; adenosylcobalamin biosynthesis.</text>
</comment>
<comment type="subunit">
    <text evidence="5 6 7">The C-terminal domain (PduOC) forms stable octamers and also crystallizes as an octamer (PubMed:27446048). Forms a complex with PduS (PubMed:15817784, PubMed:20656910).</text>
</comment>
<comment type="subcellular location">
    <subcellularLocation>
        <location evidence="14">Bacterial microcompartment</location>
    </subcellularLocation>
</comment>
<comment type="induction">
    <text evidence="1">BMC production is induced by growth on 1,2-PD vitamin B12 medium.</text>
</comment>
<comment type="domain">
    <text evidence="4 7">The N-terminus (PduON, residues 1-185) has adenosyltransferase activity in vivo and in vitro; it partially complements a deletion mutant for growth on 1,2-PD (PubMed:15547259, PubMed:27446048). The C-terminal domain (PduOC, residues 194-336) is required for full complemention of a pduO deletion (PubMed:27446048).</text>
</comment>
<comment type="disruption phenotype">
    <text evidence="2 7">Decreased growth on 1,2-PD cyanocobalamin medium; no growth is seen in a double cobA-pduO deletion.</text>
</comment>
<comment type="miscellaneous">
    <text evidence="1 3">Bacterial microcompartments (BMC) 100-200 nm in cross section are formed during aerobic growth on minimal 1,2-PD-B12 or anaerobic growth on 1,2-PD-tetrathionate medium, but not during aerobic growth on glucose, anerobic growth on glucose or pyruvate-tetrathionate (PubMed:10498708). BMCs can constitute up to 10% of total cell protein (PubMed:12923081).</text>
</comment>
<comment type="similarity">
    <text evidence="11">Belongs to the Cob(I)alamin adenosyltransferase family. PduO subfamily.</text>
</comment>
<name>PDUO_SALTY</name>
<accession>Q8ZNR5</accession>
<accession>A0A1A9TAI7</accession>
<accession>Q9XDN2</accession>
<evidence type="ECO:0000269" key="1">
    <source>
    </source>
</evidence>
<evidence type="ECO:0000269" key="2">
    <source>
    </source>
</evidence>
<evidence type="ECO:0000269" key="3">
    <source>
    </source>
</evidence>
<evidence type="ECO:0000269" key="4">
    <source>
    </source>
</evidence>
<evidence type="ECO:0000269" key="5">
    <source>
    </source>
</evidence>
<evidence type="ECO:0000269" key="6">
    <source>
    </source>
</evidence>
<evidence type="ECO:0000269" key="7">
    <source>
    </source>
</evidence>
<evidence type="ECO:0000303" key="8">
    <source>
    </source>
</evidence>
<evidence type="ECO:0000303" key="9">
    <source>
    </source>
</evidence>
<evidence type="ECO:0000303" key="10">
    <source>
    </source>
</evidence>
<evidence type="ECO:0000305" key="11"/>
<evidence type="ECO:0000305" key="12">
    <source>
    </source>
</evidence>
<evidence type="ECO:0000305" key="13">
    <source>
    </source>
</evidence>
<evidence type="ECO:0000305" key="14">
    <source>
    </source>
</evidence>
<evidence type="ECO:0000305" key="15">
    <source>
    </source>
</evidence>
<evidence type="ECO:0000305" key="16">
    <source>
    </source>
</evidence>
<evidence type="ECO:0000305" key="17">
    <source>
    </source>
</evidence>
<evidence type="ECO:0000312" key="18">
    <source>
        <dbReference type="PDB" id="5CX7"/>
    </source>
</evidence>
<evidence type="ECO:0007744" key="19">
    <source>
        <dbReference type="PDB" id="5CX7"/>
    </source>
</evidence>
<evidence type="ECO:0007829" key="20">
    <source>
        <dbReference type="PDB" id="5CX7"/>
    </source>
</evidence>
<gene>
    <name evidence="8" type="primary">pduO</name>
    <name type="ordered locus">STM2050</name>
</gene>